<reference key="1">
    <citation type="journal article" date="2009" name="J. Bacteriol.">
        <title>Genome sequence of Azotobacter vinelandii, an obligate aerobe specialized to support diverse anaerobic metabolic processes.</title>
        <authorList>
            <person name="Setubal J.C."/>
            <person name="Dos Santos P."/>
            <person name="Goldman B.S."/>
            <person name="Ertesvaag H."/>
            <person name="Espin G."/>
            <person name="Rubio L.M."/>
            <person name="Valla S."/>
            <person name="Almeida N.F."/>
            <person name="Balasubramanian D."/>
            <person name="Cromes L."/>
            <person name="Curatti L."/>
            <person name="Du Z."/>
            <person name="Godsy E."/>
            <person name="Goodner B."/>
            <person name="Hellner-Burris K."/>
            <person name="Hernandez J.A."/>
            <person name="Houmiel K."/>
            <person name="Imperial J."/>
            <person name="Kennedy C."/>
            <person name="Larson T.J."/>
            <person name="Latreille P."/>
            <person name="Ligon L.S."/>
            <person name="Lu J."/>
            <person name="Maerk M."/>
            <person name="Miller N.M."/>
            <person name="Norton S."/>
            <person name="O'Carroll I.P."/>
            <person name="Paulsen I."/>
            <person name="Raulfs E.C."/>
            <person name="Roemer R."/>
            <person name="Rosser J."/>
            <person name="Segura D."/>
            <person name="Slater S."/>
            <person name="Stricklin S.L."/>
            <person name="Studholme D.J."/>
            <person name="Sun J."/>
            <person name="Viana C.J."/>
            <person name="Wallin E."/>
            <person name="Wang B."/>
            <person name="Wheeler C."/>
            <person name="Zhu H."/>
            <person name="Dean D.R."/>
            <person name="Dixon R."/>
            <person name="Wood D."/>
        </authorList>
    </citation>
    <scope>NUCLEOTIDE SEQUENCE [LARGE SCALE GENOMIC DNA]</scope>
    <source>
        <strain>DJ / ATCC BAA-1303</strain>
    </source>
</reference>
<comment type="function">
    <text evidence="1">Allows the formation of correctly charged Asn-tRNA(Asn) or Gln-tRNA(Gln) through the transamidation of misacylated Asp-tRNA(Asn) or Glu-tRNA(Gln) in organisms which lack either or both of asparaginyl-tRNA or glutaminyl-tRNA synthetases. The reaction takes place in the presence of glutamine and ATP through an activated phospho-Asp-tRNA(Asn) or phospho-Glu-tRNA(Gln).</text>
</comment>
<comment type="catalytic activity">
    <reaction evidence="1">
        <text>L-glutamyl-tRNA(Gln) + L-glutamine + ATP + H2O = L-glutaminyl-tRNA(Gln) + L-glutamate + ADP + phosphate + H(+)</text>
        <dbReference type="Rhea" id="RHEA:17521"/>
        <dbReference type="Rhea" id="RHEA-COMP:9681"/>
        <dbReference type="Rhea" id="RHEA-COMP:9684"/>
        <dbReference type="ChEBI" id="CHEBI:15377"/>
        <dbReference type="ChEBI" id="CHEBI:15378"/>
        <dbReference type="ChEBI" id="CHEBI:29985"/>
        <dbReference type="ChEBI" id="CHEBI:30616"/>
        <dbReference type="ChEBI" id="CHEBI:43474"/>
        <dbReference type="ChEBI" id="CHEBI:58359"/>
        <dbReference type="ChEBI" id="CHEBI:78520"/>
        <dbReference type="ChEBI" id="CHEBI:78521"/>
        <dbReference type="ChEBI" id="CHEBI:456216"/>
    </reaction>
</comment>
<comment type="catalytic activity">
    <reaction evidence="1">
        <text>L-aspartyl-tRNA(Asn) + L-glutamine + ATP + H2O = L-asparaginyl-tRNA(Asn) + L-glutamate + ADP + phosphate + 2 H(+)</text>
        <dbReference type="Rhea" id="RHEA:14513"/>
        <dbReference type="Rhea" id="RHEA-COMP:9674"/>
        <dbReference type="Rhea" id="RHEA-COMP:9677"/>
        <dbReference type="ChEBI" id="CHEBI:15377"/>
        <dbReference type="ChEBI" id="CHEBI:15378"/>
        <dbReference type="ChEBI" id="CHEBI:29985"/>
        <dbReference type="ChEBI" id="CHEBI:30616"/>
        <dbReference type="ChEBI" id="CHEBI:43474"/>
        <dbReference type="ChEBI" id="CHEBI:58359"/>
        <dbReference type="ChEBI" id="CHEBI:78515"/>
        <dbReference type="ChEBI" id="CHEBI:78516"/>
        <dbReference type="ChEBI" id="CHEBI:456216"/>
    </reaction>
</comment>
<comment type="subunit">
    <text evidence="1">Heterotrimer of A, B and C subunits.</text>
</comment>
<comment type="similarity">
    <text evidence="1">Belongs to the GatC family.</text>
</comment>
<protein>
    <recommendedName>
        <fullName evidence="1">Aspartyl/glutamyl-tRNA(Asn/Gln) amidotransferase subunit C</fullName>
        <shortName evidence="1">Asp/Glu-ADT subunit C</shortName>
        <ecNumber evidence="1">6.3.5.-</ecNumber>
    </recommendedName>
</protein>
<evidence type="ECO:0000255" key="1">
    <source>
        <dbReference type="HAMAP-Rule" id="MF_00122"/>
    </source>
</evidence>
<accession>C1DQ38</accession>
<organism>
    <name type="scientific">Azotobacter vinelandii (strain DJ / ATCC BAA-1303)</name>
    <dbReference type="NCBI Taxonomy" id="322710"/>
    <lineage>
        <taxon>Bacteria</taxon>
        <taxon>Pseudomonadati</taxon>
        <taxon>Pseudomonadota</taxon>
        <taxon>Gammaproteobacteria</taxon>
        <taxon>Pseudomonadales</taxon>
        <taxon>Pseudomonadaceae</taxon>
        <taxon>Azotobacter</taxon>
    </lineage>
</organism>
<gene>
    <name evidence="1" type="primary">gatC</name>
    <name type="ordered locus">Avin_12640</name>
</gene>
<sequence>MALERSDVEKIAHLARLGLDDAEIPRTTQTLNDILGLIDRMQAVDTHGIEPLAHPLEATQRLRPDEVTETDHRDAYQAIAPAVENGLYLVPKVIE</sequence>
<keyword id="KW-0067">ATP-binding</keyword>
<keyword id="KW-0436">Ligase</keyword>
<keyword id="KW-0547">Nucleotide-binding</keyword>
<keyword id="KW-0648">Protein biosynthesis</keyword>
<proteinExistence type="inferred from homology"/>
<feature type="chain" id="PRO_1000203063" description="Aspartyl/glutamyl-tRNA(Asn/Gln) amidotransferase subunit C">
    <location>
        <begin position="1"/>
        <end position="95"/>
    </location>
</feature>
<dbReference type="EC" id="6.3.5.-" evidence="1"/>
<dbReference type="EMBL" id="CP001157">
    <property type="protein sequence ID" value="ACO77490.1"/>
    <property type="molecule type" value="Genomic_DNA"/>
</dbReference>
<dbReference type="RefSeq" id="WP_012699910.1">
    <property type="nucleotide sequence ID" value="NC_012560.1"/>
</dbReference>
<dbReference type="SMR" id="C1DQ38"/>
<dbReference type="STRING" id="322710.Avin_12640"/>
<dbReference type="EnsemblBacteria" id="ACO77490">
    <property type="protein sequence ID" value="ACO77490"/>
    <property type="gene ID" value="Avin_12640"/>
</dbReference>
<dbReference type="GeneID" id="88184580"/>
<dbReference type="KEGG" id="avn:Avin_12640"/>
<dbReference type="eggNOG" id="COG0721">
    <property type="taxonomic scope" value="Bacteria"/>
</dbReference>
<dbReference type="HOGENOM" id="CLU_105899_2_2_6"/>
<dbReference type="OrthoDB" id="9794326at2"/>
<dbReference type="Proteomes" id="UP000002424">
    <property type="component" value="Chromosome"/>
</dbReference>
<dbReference type="GO" id="GO:0050566">
    <property type="term" value="F:asparaginyl-tRNA synthase (glutamine-hydrolyzing) activity"/>
    <property type="evidence" value="ECO:0007669"/>
    <property type="project" value="RHEA"/>
</dbReference>
<dbReference type="GO" id="GO:0005524">
    <property type="term" value="F:ATP binding"/>
    <property type="evidence" value="ECO:0007669"/>
    <property type="project" value="UniProtKB-KW"/>
</dbReference>
<dbReference type="GO" id="GO:0050567">
    <property type="term" value="F:glutaminyl-tRNA synthase (glutamine-hydrolyzing) activity"/>
    <property type="evidence" value="ECO:0007669"/>
    <property type="project" value="UniProtKB-UniRule"/>
</dbReference>
<dbReference type="GO" id="GO:0070681">
    <property type="term" value="P:glutaminyl-tRNAGln biosynthesis via transamidation"/>
    <property type="evidence" value="ECO:0007669"/>
    <property type="project" value="TreeGrafter"/>
</dbReference>
<dbReference type="GO" id="GO:0006450">
    <property type="term" value="P:regulation of translational fidelity"/>
    <property type="evidence" value="ECO:0007669"/>
    <property type="project" value="InterPro"/>
</dbReference>
<dbReference type="GO" id="GO:0006412">
    <property type="term" value="P:translation"/>
    <property type="evidence" value="ECO:0007669"/>
    <property type="project" value="UniProtKB-UniRule"/>
</dbReference>
<dbReference type="Gene3D" id="1.10.20.60">
    <property type="entry name" value="Glu-tRNAGln amidotransferase C subunit, N-terminal domain"/>
    <property type="match status" value="1"/>
</dbReference>
<dbReference type="HAMAP" id="MF_00122">
    <property type="entry name" value="GatC"/>
    <property type="match status" value="1"/>
</dbReference>
<dbReference type="InterPro" id="IPR036113">
    <property type="entry name" value="Asp/Glu-ADT_sf_sub_c"/>
</dbReference>
<dbReference type="InterPro" id="IPR003837">
    <property type="entry name" value="GatC"/>
</dbReference>
<dbReference type="NCBIfam" id="TIGR00135">
    <property type="entry name" value="gatC"/>
    <property type="match status" value="1"/>
</dbReference>
<dbReference type="PANTHER" id="PTHR15004">
    <property type="entry name" value="GLUTAMYL-TRNA(GLN) AMIDOTRANSFERASE SUBUNIT C, MITOCHONDRIAL"/>
    <property type="match status" value="1"/>
</dbReference>
<dbReference type="PANTHER" id="PTHR15004:SF0">
    <property type="entry name" value="GLUTAMYL-TRNA(GLN) AMIDOTRANSFERASE SUBUNIT C, MITOCHONDRIAL"/>
    <property type="match status" value="1"/>
</dbReference>
<dbReference type="Pfam" id="PF02686">
    <property type="entry name" value="GatC"/>
    <property type="match status" value="1"/>
</dbReference>
<dbReference type="SUPFAM" id="SSF141000">
    <property type="entry name" value="Glu-tRNAGln amidotransferase C subunit"/>
    <property type="match status" value="1"/>
</dbReference>
<name>GATC_AZOVD</name>